<protein>
    <recommendedName>
        <fullName evidence="1">Succinate--CoA ligase [ADP-forming] subunit beta</fullName>
        <ecNumber evidence="1">6.2.1.5</ecNumber>
    </recommendedName>
    <alternativeName>
        <fullName evidence="1">Succinyl-CoA synthetase subunit beta</fullName>
        <shortName evidence="1">SCS-beta</shortName>
    </alternativeName>
</protein>
<keyword id="KW-0067">ATP-binding</keyword>
<keyword id="KW-0436">Ligase</keyword>
<keyword id="KW-0460">Magnesium</keyword>
<keyword id="KW-0479">Metal-binding</keyword>
<keyword id="KW-0547">Nucleotide-binding</keyword>
<keyword id="KW-1185">Reference proteome</keyword>
<keyword id="KW-0816">Tricarboxylic acid cycle</keyword>
<gene>
    <name evidence="1" type="primary">sucC</name>
    <name type="ordered locus">MCCL_0831</name>
</gene>
<sequence length="389" mass="41839">MNIHEYQGKEIFRSMGVAVPNGSVAYTPEEAVEVAKGLKEGVYVVKAQIHAGGRGKAGGVKIAKSLDEVESYAKELLGKVLVTHQTGPEGKEVKRLLVEEGCDIKKEYYLGFVLDRATDSVVLMGSEEGGTEIEEVAEATPEKIFKEVIDPVVGLMPYQARRLAFNINIPKESVNKAVKIMLGLYDVFMKKDASIIEINPLVTTGDGEVLALDAKINFDANALFRQKDVMELRDLDEEDPKEIEASKYDLSYIALDGNIGCMVNGAGLAMATMDTINHFGGNPANFLDVGGGATKEKVTEAFKIILGDEKVEGIFVNIFGGIMKCDVIAEGVVAAAKELELTIPLVVRLEGTNVDQGKEILGNSGLAITPASTMAEGAQKIVELVKEAK</sequence>
<proteinExistence type="inferred from homology"/>
<feature type="chain" id="PRO_1000197707" description="Succinate--CoA ligase [ADP-forming] subunit beta">
    <location>
        <begin position="1"/>
        <end position="389"/>
    </location>
</feature>
<feature type="domain" description="ATP-grasp" evidence="1">
    <location>
        <begin position="9"/>
        <end position="244"/>
    </location>
</feature>
<feature type="binding site" evidence="1">
    <location>
        <position position="46"/>
    </location>
    <ligand>
        <name>ATP</name>
        <dbReference type="ChEBI" id="CHEBI:30616"/>
    </ligand>
</feature>
<feature type="binding site" evidence="1">
    <location>
        <begin position="53"/>
        <end position="55"/>
    </location>
    <ligand>
        <name>ATP</name>
        <dbReference type="ChEBI" id="CHEBI:30616"/>
    </ligand>
</feature>
<feature type="binding site" evidence="1">
    <location>
        <position position="99"/>
    </location>
    <ligand>
        <name>ATP</name>
        <dbReference type="ChEBI" id="CHEBI:30616"/>
    </ligand>
</feature>
<feature type="binding site" evidence="1">
    <location>
        <position position="102"/>
    </location>
    <ligand>
        <name>ATP</name>
        <dbReference type="ChEBI" id="CHEBI:30616"/>
    </ligand>
</feature>
<feature type="binding site" evidence="1">
    <location>
        <position position="107"/>
    </location>
    <ligand>
        <name>ATP</name>
        <dbReference type="ChEBI" id="CHEBI:30616"/>
    </ligand>
</feature>
<feature type="binding site" evidence="1">
    <location>
        <position position="199"/>
    </location>
    <ligand>
        <name>Mg(2+)</name>
        <dbReference type="ChEBI" id="CHEBI:18420"/>
    </ligand>
</feature>
<feature type="binding site" evidence="1">
    <location>
        <position position="213"/>
    </location>
    <ligand>
        <name>Mg(2+)</name>
        <dbReference type="ChEBI" id="CHEBI:18420"/>
    </ligand>
</feature>
<feature type="binding site" evidence="1">
    <location>
        <position position="264"/>
    </location>
    <ligand>
        <name>substrate</name>
        <note>ligand shared with subunit alpha</note>
    </ligand>
</feature>
<feature type="binding site" evidence="1">
    <location>
        <begin position="321"/>
        <end position="323"/>
    </location>
    <ligand>
        <name>substrate</name>
        <note>ligand shared with subunit alpha</note>
    </ligand>
</feature>
<comment type="function">
    <text evidence="1">Succinyl-CoA synthetase functions in the citric acid cycle (TCA), coupling the hydrolysis of succinyl-CoA to the synthesis of either ATP or GTP and thus represents the only step of substrate-level phosphorylation in the TCA. The beta subunit provides nucleotide specificity of the enzyme and binds the substrate succinate, while the binding sites for coenzyme A and phosphate are found in the alpha subunit.</text>
</comment>
<comment type="catalytic activity">
    <reaction evidence="1">
        <text>succinate + ATP + CoA = succinyl-CoA + ADP + phosphate</text>
        <dbReference type="Rhea" id="RHEA:17661"/>
        <dbReference type="ChEBI" id="CHEBI:30031"/>
        <dbReference type="ChEBI" id="CHEBI:30616"/>
        <dbReference type="ChEBI" id="CHEBI:43474"/>
        <dbReference type="ChEBI" id="CHEBI:57287"/>
        <dbReference type="ChEBI" id="CHEBI:57292"/>
        <dbReference type="ChEBI" id="CHEBI:456216"/>
        <dbReference type="EC" id="6.2.1.5"/>
    </reaction>
    <physiologicalReaction direction="right-to-left" evidence="1">
        <dbReference type="Rhea" id="RHEA:17663"/>
    </physiologicalReaction>
</comment>
<comment type="catalytic activity">
    <reaction evidence="1">
        <text>GTP + succinate + CoA = succinyl-CoA + GDP + phosphate</text>
        <dbReference type="Rhea" id="RHEA:22120"/>
        <dbReference type="ChEBI" id="CHEBI:30031"/>
        <dbReference type="ChEBI" id="CHEBI:37565"/>
        <dbReference type="ChEBI" id="CHEBI:43474"/>
        <dbReference type="ChEBI" id="CHEBI:57287"/>
        <dbReference type="ChEBI" id="CHEBI:57292"/>
        <dbReference type="ChEBI" id="CHEBI:58189"/>
    </reaction>
    <physiologicalReaction direction="right-to-left" evidence="1">
        <dbReference type="Rhea" id="RHEA:22122"/>
    </physiologicalReaction>
</comment>
<comment type="cofactor">
    <cofactor evidence="1">
        <name>Mg(2+)</name>
        <dbReference type="ChEBI" id="CHEBI:18420"/>
    </cofactor>
    <text evidence="1">Binds 1 Mg(2+) ion per subunit.</text>
</comment>
<comment type="pathway">
    <text evidence="1">Carbohydrate metabolism; tricarboxylic acid cycle; succinate from succinyl-CoA (ligase route): step 1/1.</text>
</comment>
<comment type="subunit">
    <text evidence="1">Heterotetramer of two alpha and two beta subunits.</text>
</comment>
<comment type="similarity">
    <text evidence="1">Belongs to the succinate/malate CoA ligase beta subunit family.</text>
</comment>
<organism>
    <name type="scientific">Macrococcus caseolyticus (strain JCSC5402)</name>
    <name type="common">Macrococcoides caseolyticum</name>
    <dbReference type="NCBI Taxonomy" id="458233"/>
    <lineage>
        <taxon>Bacteria</taxon>
        <taxon>Bacillati</taxon>
        <taxon>Bacillota</taxon>
        <taxon>Bacilli</taxon>
        <taxon>Bacillales</taxon>
        <taxon>Staphylococcaceae</taxon>
        <taxon>Macrococcoides</taxon>
    </lineage>
</organism>
<accession>B9EBC7</accession>
<name>SUCC_MACCJ</name>
<reference key="1">
    <citation type="journal article" date="2009" name="J. Bacteriol.">
        <title>Complete genome sequence of Macrococcus caseolyticus strain JCSCS5402, reflecting the ancestral genome of the human-pathogenic staphylococci.</title>
        <authorList>
            <person name="Baba T."/>
            <person name="Kuwahara-Arai K."/>
            <person name="Uchiyama I."/>
            <person name="Takeuchi F."/>
            <person name="Ito T."/>
            <person name="Hiramatsu K."/>
        </authorList>
    </citation>
    <scope>NUCLEOTIDE SEQUENCE [LARGE SCALE GENOMIC DNA]</scope>
    <source>
        <strain>JCSC5402</strain>
    </source>
</reference>
<dbReference type="EC" id="6.2.1.5" evidence="1"/>
<dbReference type="EMBL" id="AP009484">
    <property type="protein sequence ID" value="BAH17538.1"/>
    <property type="molecule type" value="Genomic_DNA"/>
</dbReference>
<dbReference type="RefSeq" id="WP_012656738.1">
    <property type="nucleotide sequence ID" value="NC_011999.1"/>
</dbReference>
<dbReference type="SMR" id="B9EBC7"/>
<dbReference type="STRING" id="458233.MCCL_0831"/>
<dbReference type="GeneID" id="61129260"/>
<dbReference type="KEGG" id="mcl:MCCL_0831"/>
<dbReference type="eggNOG" id="COG0045">
    <property type="taxonomic scope" value="Bacteria"/>
</dbReference>
<dbReference type="HOGENOM" id="CLU_037430_0_2_9"/>
<dbReference type="OrthoDB" id="9802602at2"/>
<dbReference type="UniPathway" id="UPA00223">
    <property type="reaction ID" value="UER00999"/>
</dbReference>
<dbReference type="Proteomes" id="UP000001383">
    <property type="component" value="Chromosome"/>
</dbReference>
<dbReference type="GO" id="GO:0005829">
    <property type="term" value="C:cytosol"/>
    <property type="evidence" value="ECO:0007669"/>
    <property type="project" value="TreeGrafter"/>
</dbReference>
<dbReference type="GO" id="GO:0042709">
    <property type="term" value="C:succinate-CoA ligase complex"/>
    <property type="evidence" value="ECO:0007669"/>
    <property type="project" value="TreeGrafter"/>
</dbReference>
<dbReference type="GO" id="GO:0005524">
    <property type="term" value="F:ATP binding"/>
    <property type="evidence" value="ECO:0007669"/>
    <property type="project" value="UniProtKB-UniRule"/>
</dbReference>
<dbReference type="GO" id="GO:0000287">
    <property type="term" value="F:magnesium ion binding"/>
    <property type="evidence" value="ECO:0007669"/>
    <property type="project" value="UniProtKB-UniRule"/>
</dbReference>
<dbReference type="GO" id="GO:0004775">
    <property type="term" value="F:succinate-CoA ligase (ADP-forming) activity"/>
    <property type="evidence" value="ECO:0007669"/>
    <property type="project" value="UniProtKB-UniRule"/>
</dbReference>
<dbReference type="GO" id="GO:0004776">
    <property type="term" value="F:succinate-CoA ligase (GDP-forming) activity"/>
    <property type="evidence" value="ECO:0007669"/>
    <property type="project" value="RHEA"/>
</dbReference>
<dbReference type="GO" id="GO:0006104">
    <property type="term" value="P:succinyl-CoA metabolic process"/>
    <property type="evidence" value="ECO:0007669"/>
    <property type="project" value="TreeGrafter"/>
</dbReference>
<dbReference type="GO" id="GO:0006099">
    <property type="term" value="P:tricarboxylic acid cycle"/>
    <property type="evidence" value="ECO:0007669"/>
    <property type="project" value="UniProtKB-UniRule"/>
</dbReference>
<dbReference type="FunFam" id="3.30.1490.20:FF:000002">
    <property type="entry name" value="Succinate--CoA ligase [ADP-forming] subunit beta"/>
    <property type="match status" value="1"/>
</dbReference>
<dbReference type="FunFam" id="3.30.470.20:FF:000002">
    <property type="entry name" value="Succinate--CoA ligase [ADP-forming] subunit beta"/>
    <property type="match status" value="1"/>
</dbReference>
<dbReference type="FunFam" id="3.40.50.261:FF:000001">
    <property type="entry name" value="Succinate--CoA ligase [ADP-forming] subunit beta"/>
    <property type="match status" value="1"/>
</dbReference>
<dbReference type="Gene3D" id="3.30.1490.20">
    <property type="entry name" value="ATP-grasp fold, A domain"/>
    <property type="match status" value="1"/>
</dbReference>
<dbReference type="Gene3D" id="3.30.470.20">
    <property type="entry name" value="ATP-grasp fold, B domain"/>
    <property type="match status" value="1"/>
</dbReference>
<dbReference type="Gene3D" id="3.40.50.261">
    <property type="entry name" value="Succinyl-CoA synthetase domains"/>
    <property type="match status" value="1"/>
</dbReference>
<dbReference type="HAMAP" id="MF_00558">
    <property type="entry name" value="Succ_CoA_beta"/>
    <property type="match status" value="1"/>
</dbReference>
<dbReference type="InterPro" id="IPR011761">
    <property type="entry name" value="ATP-grasp"/>
</dbReference>
<dbReference type="InterPro" id="IPR013650">
    <property type="entry name" value="ATP-grasp_succ-CoA_synth-type"/>
</dbReference>
<dbReference type="InterPro" id="IPR013815">
    <property type="entry name" value="ATP_grasp_subdomain_1"/>
</dbReference>
<dbReference type="InterPro" id="IPR017866">
    <property type="entry name" value="Succ-CoA_synthase_bsu_CS"/>
</dbReference>
<dbReference type="InterPro" id="IPR005811">
    <property type="entry name" value="SUCC_ACL_C"/>
</dbReference>
<dbReference type="InterPro" id="IPR005809">
    <property type="entry name" value="Succ_CoA_ligase-like_bsu"/>
</dbReference>
<dbReference type="InterPro" id="IPR016102">
    <property type="entry name" value="Succinyl-CoA_synth-like"/>
</dbReference>
<dbReference type="NCBIfam" id="NF001913">
    <property type="entry name" value="PRK00696.1"/>
    <property type="match status" value="1"/>
</dbReference>
<dbReference type="NCBIfam" id="TIGR01016">
    <property type="entry name" value="sucCoAbeta"/>
    <property type="match status" value="1"/>
</dbReference>
<dbReference type="PANTHER" id="PTHR11815:SF10">
    <property type="entry name" value="SUCCINATE--COA LIGASE [GDP-FORMING] SUBUNIT BETA, MITOCHONDRIAL"/>
    <property type="match status" value="1"/>
</dbReference>
<dbReference type="PANTHER" id="PTHR11815">
    <property type="entry name" value="SUCCINYL-COA SYNTHETASE BETA CHAIN"/>
    <property type="match status" value="1"/>
</dbReference>
<dbReference type="Pfam" id="PF08442">
    <property type="entry name" value="ATP-grasp_2"/>
    <property type="match status" value="1"/>
</dbReference>
<dbReference type="Pfam" id="PF00549">
    <property type="entry name" value="Ligase_CoA"/>
    <property type="match status" value="1"/>
</dbReference>
<dbReference type="PIRSF" id="PIRSF001554">
    <property type="entry name" value="SucCS_beta"/>
    <property type="match status" value="1"/>
</dbReference>
<dbReference type="SUPFAM" id="SSF56059">
    <property type="entry name" value="Glutathione synthetase ATP-binding domain-like"/>
    <property type="match status" value="1"/>
</dbReference>
<dbReference type="SUPFAM" id="SSF52210">
    <property type="entry name" value="Succinyl-CoA synthetase domains"/>
    <property type="match status" value="1"/>
</dbReference>
<dbReference type="PROSITE" id="PS50975">
    <property type="entry name" value="ATP_GRASP"/>
    <property type="match status" value="1"/>
</dbReference>
<dbReference type="PROSITE" id="PS01217">
    <property type="entry name" value="SUCCINYL_COA_LIG_3"/>
    <property type="match status" value="1"/>
</dbReference>
<evidence type="ECO:0000255" key="1">
    <source>
        <dbReference type="HAMAP-Rule" id="MF_00558"/>
    </source>
</evidence>